<feature type="chain" id="PRO_0000075686" description="Sphingomyelin phosphodiesterase 2">
    <location>
        <begin position="1"/>
        <end position="423"/>
    </location>
</feature>
<feature type="transmembrane region" description="Helical" evidence="3">
    <location>
        <begin position="330"/>
        <end position="350"/>
    </location>
</feature>
<feature type="transmembrane region" description="Helical" evidence="3">
    <location>
        <begin position="354"/>
        <end position="374"/>
    </location>
</feature>
<feature type="region of interest" description="Disordered" evidence="4">
    <location>
        <begin position="400"/>
        <end position="423"/>
    </location>
</feature>
<feature type="active site" description="Proton acceptor" evidence="1">
    <location>
        <position position="272"/>
    </location>
</feature>
<feature type="binding site" evidence="1">
    <location>
        <position position="49"/>
    </location>
    <ligand>
        <name>Mg(2+)</name>
        <dbReference type="ChEBI" id="CHEBI:18420"/>
    </ligand>
</feature>
<feature type="site" description="Important for substrate recognition" evidence="1">
    <location>
        <position position="180"/>
    </location>
</feature>
<feature type="sequence variant" id="VAR_050305" description="In dbSNP:rs1048197." evidence="8">
    <original>P</original>
    <variation>L</variation>
    <location>
        <position position="3"/>
    </location>
</feature>
<feature type="sequence variant" id="VAR_050306" description="In dbSNP:rs9386806.">
    <original>V</original>
    <variation>I</variation>
    <location>
        <position position="223"/>
    </location>
</feature>
<feature type="sequence variant" id="VAR_024181" description="In dbSNP:rs1476387." evidence="7 8">
    <original>R</original>
    <variation>S</variation>
    <location>
        <position position="265"/>
    </location>
</feature>
<feature type="strand" evidence="16">
    <location>
        <begin position="6"/>
        <end position="18"/>
    </location>
</feature>
<feature type="turn" evidence="16">
    <location>
        <begin position="20"/>
        <end position="22"/>
    </location>
</feature>
<feature type="helix" evidence="16">
    <location>
        <begin position="26"/>
        <end position="40"/>
    </location>
</feature>
<feature type="strand" evidence="16">
    <location>
        <begin position="43"/>
        <end position="50"/>
    </location>
</feature>
<feature type="helix" evidence="16">
    <location>
        <begin position="53"/>
        <end position="62"/>
    </location>
</feature>
<feature type="turn" evidence="16">
    <location>
        <begin position="63"/>
        <end position="66"/>
    </location>
</feature>
<feature type="strand" evidence="16">
    <location>
        <begin position="69"/>
        <end position="73"/>
    </location>
</feature>
<feature type="turn" evidence="16">
    <location>
        <begin position="76"/>
        <end position="78"/>
    </location>
</feature>
<feature type="strand" evidence="16">
    <location>
        <begin position="82"/>
        <end position="88"/>
    </location>
</feature>
<feature type="strand" evidence="16">
    <location>
        <begin position="92"/>
        <end position="97"/>
    </location>
</feature>
<feature type="turn" evidence="16">
    <location>
        <begin position="107"/>
        <end position="109"/>
    </location>
</feature>
<feature type="helix" evidence="16">
    <location>
        <begin position="111"/>
        <end position="114"/>
    </location>
</feature>
<feature type="strand" evidence="16">
    <location>
        <begin position="117"/>
        <end position="125"/>
    </location>
</feature>
<feature type="strand" evidence="16">
    <location>
        <begin position="128"/>
        <end position="136"/>
    </location>
</feature>
<feature type="strand" evidence="16">
    <location>
        <begin position="143"/>
        <end position="145"/>
    </location>
</feature>
<feature type="helix" evidence="16">
    <location>
        <begin position="149"/>
        <end position="166"/>
    </location>
</feature>
<feature type="turn" evidence="16">
    <location>
        <begin position="167"/>
        <end position="169"/>
    </location>
</feature>
<feature type="strand" evidence="16">
    <location>
        <begin position="171"/>
        <end position="178"/>
    </location>
</feature>
<feature type="helix" evidence="16">
    <location>
        <begin position="186"/>
        <end position="195"/>
    </location>
</feature>
<feature type="helix" evidence="16">
    <location>
        <begin position="200"/>
        <end position="203"/>
    </location>
</feature>
<feature type="strand" evidence="16">
    <location>
        <begin position="205"/>
        <end position="210"/>
    </location>
</feature>
<feature type="helix" evidence="16">
    <location>
        <begin position="211"/>
        <end position="213"/>
    </location>
</feature>
<feature type="strand" evidence="16">
    <location>
        <begin position="218"/>
        <end position="223"/>
    </location>
</feature>
<feature type="turn" evidence="16">
    <location>
        <begin position="225"/>
        <end position="228"/>
    </location>
</feature>
<feature type="strand" evidence="16">
    <location>
        <begin position="238"/>
        <end position="244"/>
    </location>
</feature>
<feature type="strand" evidence="16">
    <location>
        <begin position="248"/>
        <end position="257"/>
    </location>
</feature>
<feature type="strand" evidence="16">
    <location>
        <begin position="265"/>
        <end position="267"/>
    </location>
</feature>
<feature type="strand" evidence="16">
    <location>
        <begin position="269"/>
        <end position="272"/>
    </location>
</feature>
<feature type="strand" evidence="16">
    <location>
        <begin position="275"/>
        <end position="283"/>
    </location>
</feature>
<feature type="helix" evidence="16">
    <location>
        <begin position="303"/>
        <end position="347"/>
    </location>
</feature>
<feature type="helix" evidence="16">
    <location>
        <begin position="354"/>
        <end position="400"/>
    </location>
</feature>
<sequence>MKPNFSLRLRIFNLNCWGIPYLSKHRADRMRRLGDFLNQESFDLALLEEVWSEQDFQYLRQKLSPTYPAAHHFRSGIIGSGLCVFSKHPIQELTQHIYTLNGYPYMIHHGDWFSGKAVGLLVLHLSGMVLNAYVTHLHAEYNRQKDIYLAHRVAQAWELAQFIHHTSKKADVVLLCGDLNMHPEDLGCCLLKEWTGLHDAYLETRDFKGSEEGNTMVPKNCYVSQQELKPFPFGVRIDYVLYKAVSGFYISCKSFETTTGFDPHRGTPLSDHEALMATLFVRHSPPQQNPSSTHGPAERSPLMCVLKEAWTELGLGMAQARWWATFASYVIGLGLLLLALLCVLAAGGGAGEAAILLWTPSVGLVLWAGAFYLFHVQEVNGLYRAQAELQHVLGRAREAQDLGPEPQPALLLGQQEGDRTKEQ</sequence>
<comment type="function">
    <text evidence="5 6">Catalyzes, at least in vitro, the hydrolysis of sphingomyelin to form ceramide and phosphocholine (PubMed:10608884). Also hydrolyzes 1-O-alkyl-2-lyso-sn-glycero-3-phosphocholine (lyso-platelet-activating factor) in vivo (PubMed:10608884). Also acts on 1-acyl-2-lyso-sn-glycero-3-phosphocholine (lyso-PC) and sphingosylphosphocholine (PubMed:10608884, PubMed:14741383).</text>
</comment>
<comment type="catalytic activity">
    <reaction evidence="5 6">
        <text>a sphingomyelin + H2O = phosphocholine + an N-acylsphing-4-enine + H(+)</text>
        <dbReference type="Rhea" id="RHEA:19253"/>
        <dbReference type="ChEBI" id="CHEBI:15377"/>
        <dbReference type="ChEBI" id="CHEBI:15378"/>
        <dbReference type="ChEBI" id="CHEBI:17636"/>
        <dbReference type="ChEBI" id="CHEBI:52639"/>
        <dbReference type="ChEBI" id="CHEBI:295975"/>
        <dbReference type="EC" id="3.1.4.12"/>
    </reaction>
    <physiologicalReaction direction="left-to-right" evidence="13">
        <dbReference type="Rhea" id="RHEA:19254"/>
    </physiologicalReaction>
</comment>
<comment type="catalytic activity">
    <reaction evidence="6">
        <text>an N-(acyl)-sphingosylphosphocholine + H2O = an N-acyl-sphingoid base + phosphocholine + H(+)</text>
        <dbReference type="Rhea" id="RHEA:45300"/>
        <dbReference type="ChEBI" id="CHEBI:15377"/>
        <dbReference type="ChEBI" id="CHEBI:15378"/>
        <dbReference type="ChEBI" id="CHEBI:64583"/>
        <dbReference type="ChEBI" id="CHEBI:83273"/>
        <dbReference type="ChEBI" id="CHEBI:295975"/>
    </reaction>
    <physiologicalReaction direction="left-to-right" evidence="14">
        <dbReference type="Rhea" id="RHEA:45301"/>
    </physiologicalReaction>
</comment>
<comment type="catalytic activity">
    <reaction evidence="5 6">
        <text>1-O-octadecyl-sn-glycero-3-phosphocholine + H2O = 1-O-octadecyl-sn-glycerol + phosphocholine + H(+)</text>
        <dbReference type="Rhea" id="RHEA:39923"/>
        <dbReference type="ChEBI" id="CHEBI:15377"/>
        <dbReference type="ChEBI" id="CHEBI:15378"/>
        <dbReference type="ChEBI" id="CHEBI:74001"/>
        <dbReference type="ChEBI" id="CHEBI:75216"/>
        <dbReference type="ChEBI" id="CHEBI:295975"/>
    </reaction>
    <physiologicalReaction direction="left-to-right" evidence="14">
        <dbReference type="Rhea" id="RHEA:39924"/>
    </physiologicalReaction>
</comment>
<comment type="catalytic activity">
    <reaction evidence="5">
        <text>1-O-hexadecyl-sn-glycero-3-phosphocholine + H2O = 1-O-hexadecyl-sn-glycerol + phosphocholine + H(+)</text>
        <dbReference type="Rhea" id="RHEA:36087"/>
        <dbReference type="ChEBI" id="CHEBI:15377"/>
        <dbReference type="ChEBI" id="CHEBI:15378"/>
        <dbReference type="ChEBI" id="CHEBI:34115"/>
        <dbReference type="ChEBI" id="CHEBI:64496"/>
        <dbReference type="ChEBI" id="CHEBI:295975"/>
    </reaction>
    <physiologicalReaction direction="left-to-right" evidence="13">
        <dbReference type="Rhea" id="RHEA:36088"/>
    </physiologicalReaction>
</comment>
<comment type="catalytic activity">
    <reaction evidence="6">
        <text>1-hexadecanoyl-sn-glycero-3-phosphocholine + H2O = 1-hexadecanoyl-sn-glycerol + phosphocholine + H(+)</text>
        <dbReference type="Rhea" id="RHEA:41119"/>
        <dbReference type="ChEBI" id="CHEBI:15377"/>
        <dbReference type="ChEBI" id="CHEBI:15378"/>
        <dbReference type="ChEBI" id="CHEBI:72998"/>
        <dbReference type="ChEBI" id="CHEBI:75542"/>
        <dbReference type="ChEBI" id="CHEBI:295975"/>
    </reaction>
    <physiologicalReaction direction="left-to-right" evidence="14">
        <dbReference type="Rhea" id="RHEA:41120"/>
    </physiologicalReaction>
</comment>
<comment type="catalytic activity">
    <reaction evidence="6">
        <text>a sphingosylphosphocholine + H2O = a sphingoid base + phosphocholine + H(+)</text>
        <dbReference type="Rhea" id="RHEA:45296"/>
        <dbReference type="ChEBI" id="CHEBI:15377"/>
        <dbReference type="ChEBI" id="CHEBI:15378"/>
        <dbReference type="ChEBI" id="CHEBI:84410"/>
        <dbReference type="ChEBI" id="CHEBI:85171"/>
        <dbReference type="ChEBI" id="CHEBI:295975"/>
    </reaction>
    <physiologicalReaction direction="left-to-right" evidence="14">
        <dbReference type="Rhea" id="RHEA:45297"/>
    </physiologicalReaction>
</comment>
<comment type="cofactor">
    <cofactor evidence="5">
        <name>Mg(2+)</name>
        <dbReference type="ChEBI" id="CHEBI:18420"/>
    </cofactor>
</comment>
<comment type="biophysicochemical properties">
    <kinetics>
        <KM evidence="5">26.2 uM for sphingomyelin (at pH 7.4 and 37 degrees Celsius in the presence of 0.05% Triton X-100)</KM>
        <KM evidence="5">26.9 uM for 1-O-octadecyl-sn-glycero-3-phosphocholine (at pH 7.4 and 37 degrees Celsius)</KM>
        <KM evidence="5">27.1 uM for 1-O-hexadecyl-sn-glycero-3-phosphocholine (at pH 7.4 and 37 degrees Celsius)</KM>
        <Vmax evidence="6">367.0 nmol/h/mg enzyme with sphingomyelin as substrate (at pH 7.5 and 37 degrees Celsius in presence of 0.1% Triton X-100)</Vmax>
        <Vmax evidence="6">434.0 nmol/h/mg enzyme with sphingosylphosphocholine as substrate (at pH 7.5 and 37 degrees Celsius)</Vmax>
        <Vmax evidence="6">349.0 nmol/h/mg enzyme with 1-O-octadecyl-sn-glycero-3-phosphocholine as substrate (at pH 7.5 and 37 degrees Celsius)</Vmax>
        <Vmax evidence="6">611.0 nmol/h/mg enzyme with 1-hexadecanoyl-sn-glycero-3-phosphocholine as substrate (at pH 7.5 and 37 degrees Celsius)</Vmax>
    </kinetics>
</comment>
<comment type="pathway">
    <text evidence="5 6">Lipid metabolism; sphingolipid metabolism.</text>
</comment>
<comment type="interaction">
    <interactant intactId="EBI-12828299">
        <id>O60906</id>
    </interactant>
    <interactant intactId="EBI-2808808">
        <id>P53367</id>
        <label>ARFIP1</label>
    </interactant>
    <organismsDiffer>false</organismsDiffer>
    <experiments>3</experiments>
</comment>
<comment type="interaction">
    <interactant intactId="EBI-12828299">
        <id>O60906</id>
    </interactant>
    <interactant intactId="EBI-1237454">
        <id>O00622</id>
        <label>CCN1</label>
    </interactant>
    <organismsDiffer>false</organismsDiffer>
    <experiments>3</experiments>
</comment>
<comment type="interaction">
    <interactant intactId="EBI-12828299">
        <id>O60906</id>
    </interactant>
    <interactant intactId="EBI-745535">
        <id>Q8NI60</id>
        <label>COQ8A</label>
    </interactant>
    <organismsDiffer>false</organismsDiffer>
    <experiments>3</experiments>
</comment>
<comment type="interaction">
    <interactant intactId="EBI-12828299">
        <id>O60906</id>
    </interactant>
    <interactant intactId="EBI-9304251">
        <id>Q05329</id>
        <label>GAD2</label>
    </interactant>
    <organismsDiffer>false</organismsDiffer>
    <experiments>3</experiments>
</comment>
<comment type="interaction">
    <interactant intactId="EBI-12828299">
        <id>O60906</id>
    </interactant>
    <interactant intactId="EBI-372435">
        <id>P42898</id>
        <label>MTHFR</label>
    </interactant>
    <organismsDiffer>false</organismsDiffer>
    <experiments>2</experiments>
</comment>
<comment type="interaction">
    <interactant intactId="EBI-12828299">
        <id>O60906</id>
    </interactant>
    <interactant intactId="EBI-11978907">
        <id>Q9ULP0-2</id>
        <label>NDRG4</label>
    </interactant>
    <organismsDiffer>false</organismsDiffer>
    <experiments>3</experiments>
</comment>
<comment type="interaction">
    <interactant intactId="EBI-12828299">
        <id>O60906</id>
    </interactant>
    <interactant intactId="EBI-741171">
        <id>Q96AL5</id>
        <label>PBX3</label>
    </interactant>
    <organismsDiffer>false</organismsDiffer>
    <experiments>3</experiments>
</comment>
<comment type="interaction">
    <interactant intactId="EBI-12828299">
        <id>O60906</id>
    </interactant>
    <interactant intactId="EBI-1050125">
        <id>O15173</id>
        <label>PGRMC2</label>
    </interactant>
    <organismsDiffer>false</organismsDiffer>
    <experiments>3</experiments>
</comment>
<comment type="interaction">
    <interactant intactId="EBI-12828299">
        <id>O60906</id>
    </interactant>
    <interactant intactId="EBI-14223623">
        <id>Q9UKF7-2</id>
        <label>PITPNC1</label>
    </interactant>
    <organismsDiffer>false</organismsDiffer>
    <experiments>3</experiments>
</comment>
<comment type="interaction">
    <interactant intactId="EBI-12828299">
        <id>O60906</id>
    </interactant>
    <interactant intactId="EBI-2623095">
        <id>Q9Y371</id>
        <label>SH3GLB1</label>
    </interactant>
    <organismsDiffer>false</organismsDiffer>
    <experiments>3</experiments>
</comment>
<comment type="interaction">
    <interactant intactId="EBI-12828299">
        <id>O60906</id>
    </interactant>
    <interactant intactId="EBI-3923031">
        <id>Q14973</id>
        <label>SLC10A1</label>
    </interactant>
    <organismsDiffer>false</organismsDiffer>
    <experiments>3</experiments>
</comment>
<comment type="interaction">
    <interactant intactId="EBI-12828299">
        <id>O60906</id>
    </interactant>
    <interactant intactId="EBI-13292283">
        <id>Q9UHI5</id>
        <label>SLC7A8</label>
    </interactant>
    <organismsDiffer>false</organismsDiffer>
    <experiments>3</experiments>
</comment>
<comment type="interaction">
    <interactant intactId="EBI-12828299">
        <id>O60906</id>
    </interactant>
    <interactant intactId="EBI-722932">
        <id>P49675</id>
        <label>STAR</label>
    </interactant>
    <organismsDiffer>false</organismsDiffer>
    <experiments>3</experiments>
</comment>
<comment type="interaction">
    <interactant intactId="EBI-12828299">
        <id>O60906</id>
    </interactant>
    <interactant intactId="EBI-8638294">
        <id>Q9NUH8</id>
        <label>TMEM14B</label>
    </interactant>
    <organismsDiffer>false</organismsDiffer>
    <experiments>3</experiments>
</comment>
<comment type="interaction">
    <interactant intactId="EBI-12828299">
        <id>O60906</id>
    </interactant>
    <interactant intactId="EBI-17684533">
        <id>Q9NRX6</id>
        <label>TMEM167B</label>
    </interactant>
    <organismsDiffer>false</organismsDiffer>
    <experiments>3</experiments>
</comment>
<comment type="subcellular location">
    <subcellularLocation>
        <location evidence="2">Cell membrane</location>
        <topology evidence="3">Multi-pass membrane protein</topology>
    </subcellularLocation>
</comment>
<comment type="similarity">
    <text evidence="12">Belongs to the neutral sphingomyelinase family.</text>
</comment>
<gene>
    <name evidence="15" type="primary">SMPD2</name>
</gene>
<protein>
    <recommendedName>
        <fullName evidence="14">Sphingomyelin phosphodiesterase 2</fullName>
        <ecNumber evidence="5 6">3.1.4.12</ecNumber>
    </recommendedName>
    <alternativeName>
        <fullName evidence="9">Lyso-platelet-activating factor-phospholipase C</fullName>
        <shortName evidence="9">Lyso-PAF-PLC</shortName>
    </alternativeName>
    <alternativeName>
        <fullName evidence="11">Neutral sphingomyelinase</fullName>
        <shortName evidence="11">N-SMase</shortName>
        <shortName evidence="11">nSMase</shortName>
        <shortName evidence="10">nSMase1</shortName>
    </alternativeName>
</protein>
<name>NSMA_HUMAN</name>
<organism>
    <name type="scientific">Homo sapiens</name>
    <name type="common">Human</name>
    <dbReference type="NCBI Taxonomy" id="9606"/>
    <lineage>
        <taxon>Eukaryota</taxon>
        <taxon>Metazoa</taxon>
        <taxon>Chordata</taxon>
        <taxon>Craniata</taxon>
        <taxon>Vertebrata</taxon>
        <taxon>Euteleostomi</taxon>
        <taxon>Mammalia</taxon>
        <taxon>Eutheria</taxon>
        <taxon>Euarchontoglires</taxon>
        <taxon>Primates</taxon>
        <taxon>Haplorrhini</taxon>
        <taxon>Catarrhini</taxon>
        <taxon>Hominidae</taxon>
        <taxon>Homo</taxon>
    </lineage>
</organism>
<reference key="1">
    <citation type="journal article" date="1998" name="Proc. Natl. Acad. Sci. U.S.A.">
        <title>Cloned mammalian neutral sphingomyelinase: functions in sphingolipid signaling?</title>
        <authorList>
            <person name="Tomiuk S."/>
            <person name="Hofmann K."/>
            <person name="Nix M."/>
            <person name="Zumbansen M."/>
            <person name="Stoffel W."/>
        </authorList>
    </citation>
    <scope>NUCLEOTIDE SEQUENCE [MRNA]</scope>
    <scope>VARIANTS LEU-3 AND SER-265</scope>
</reference>
<reference key="2">
    <citation type="journal article" date="2003" name="Nature">
        <title>The DNA sequence and analysis of human chromosome 6.</title>
        <authorList>
            <person name="Mungall A.J."/>
            <person name="Palmer S.A."/>
            <person name="Sims S.K."/>
            <person name="Edwards C.A."/>
            <person name="Ashurst J.L."/>
            <person name="Wilming L."/>
            <person name="Jones M.C."/>
            <person name="Horton R."/>
            <person name="Hunt S.E."/>
            <person name="Scott C.E."/>
            <person name="Gilbert J.G.R."/>
            <person name="Clamp M.E."/>
            <person name="Bethel G."/>
            <person name="Milne S."/>
            <person name="Ainscough R."/>
            <person name="Almeida J.P."/>
            <person name="Ambrose K.D."/>
            <person name="Andrews T.D."/>
            <person name="Ashwell R.I.S."/>
            <person name="Babbage A.K."/>
            <person name="Bagguley C.L."/>
            <person name="Bailey J."/>
            <person name="Banerjee R."/>
            <person name="Barker D.J."/>
            <person name="Barlow K.F."/>
            <person name="Bates K."/>
            <person name="Beare D.M."/>
            <person name="Beasley H."/>
            <person name="Beasley O."/>
            <person name="Bird C.P."/>
            <person name="Blakey S.E."/>
            <person name="Bray-Allen S."/>
            <person name="Brook J."/>
            <person name="Brown A.J."/>
            <person name="Brown J.Y."/>
            <person name="Burford D.C."/>
            <person name="Burrill W."/>
            <person name="Burton J."/>
            <person name="Carder C."/>
            <person name="Carter N.P."/>
            <person name="Chapman J.C."/>
            <person name="Clark S.Y."/>
            <person name="Clark G."/>
            <person name="Clee C.M."/>
            <person name="Clegg S."/>
            <person name="Cobley V."/>
            <person name="Collier R.E."/>
            <person name="Collins J.E."/>
            <person name="Colman L.K."/>
            <person name="Corby N.R."/>
            <person name="Coville G.J."/>
            <person name="Culley K.M."/>
            <person name="Dhami P."/>
            <person name="Davies J."/>
            <person name="Dunn M."/>
            <person name="Earthrowl M.E."/>
            <person name="Ellington A.E."/>
            <person name="Evans K.A."/>
            <person name="Faulkner L."/>
            <person name="Francis M.D."/>
            <person name="Frankish A."/>
            <person name="Frankland J."/>
            <person name="French L."/>
            <person name="Garner P."/>
            <person name="Garnett J."/>
            <person name="Ghori M.J."/>
            <person name="Gilby L.M."/>
            <person name="Gillson C.J."/>
            <person name="Glithero R.J."/>
            <person name="Grafham D.V."/>
            <person name="Grant M."/>
            <person name="Gribble S."/>
            <person name="Griffiths C."/>
            <person name="Griffiths M.N.D."/>
            <person name="Hall R."/>
            <person name="Halls K.S."/>
            <person name="Hammond S."/>
            <person name="Harley J.L."/>
            <person name="Hart E.A."/>
            <person name="Heath P.D."/>
            <person name="Heathcott R."/>
            <person name="Holmes S.J."/>
            <person name="Howden P.J."/>
            <person name="Howe K.L."/>
            <person name="Howell G.R."/>
            <person name="Huckle E."/>
            <person name="Humphray S.J."/>
            <person name="Humphries M.D."/>
            <person name="Hunt A.R."/>
            <person name="Johnson C.M."/>
            <person name="Joy A.A."/>
            <person name="Kay M."/>
            <person name="Keenan S.J."/>
            <person name="Kimberley A.M."/>
            <person name="King A."/>
            <person name="Laird G.K."/>
            <person name="Langford C."/>
            <person name="Lawlor S."/>
            <person name="Leongamornlert D.A."/>
            <person name="Leversha M."/>
            <person name="Lloyd C.R."/>
            <person name="Lloyd D.M."/>
            <person name="Loveland J.E."/>
            <person name="Lovell J."/>
            <person name="Martin S."/>
            <person name="Mashreghi-Mohammadi M."/>
            <person name="Maslen G.L."/>
            <person name="Matthews L."/>
            <person name="McCann O.T."/>
            <person name="McLaren S.J."/>
            <person name="McLay K."/>
            <person name="McMurray A."/>
            <person name="Moore M.J.F."/>
            <person name="Mullikin J.C."/>
            <person name="Niblett D."/>
            <person name="Nickerson T."/>
            <person name="Novik K.L."/>
            <person name="Oliver K."/>
            <person name="Overton-Larty E.K."/>
            <person name="Parker A."/>
            <person name="Patel R."/>
            <person name="Pearce A.V."/>
            <person name="Peck A.I."/>
            <person name="Phillimore B.J.C.T."/>
            <person name="Phillips S."/>
            <person name="Plumb R.W."/>
            <person name="Porter K.M."/>
            <person name="Ramsey Y."/>
            <person name="Ranby S.A."/>
            <person name="Rice C.M."/>
            <person name="Ross M.T."/>
            <person name="Searle S.M."/>
            <person name="Sehra H.K."/>
            <person name="Sheridan E."/>
            <person name="Skuce C.D."/>
            <person name="Smith S."/>
            <person name="Smith M."/>
            <person name="Spraggon L."/>
            <person name="Squares S.L."/>
            <person name="Steward C.A."/>
            <person name="Sycamore N."/>
            <person name="Tamlyn-Hall G."/>
            <person name="Tester J."/>
            <person name="Theaker A.J."/>
            <person name="Thomas D.W."/>
            <person name="Thorpe A."/>
            <person name="Tracey A."/>
            <person name="Tromans A."/>
            <person name="Tubby B."/>
            <person name="Wall M."/>
            <person name="Wallis J.M."/>
            <person name="West A.P."/>
            <person name="White S.S."/>
            <person name="Whitehead S.L."/>
            <person name="Whittaker H."/>
            <person name="Wild A."/>
            <person name="Willey D.J."/>
            <person name="Wilmer T.E."/>
            <person name="Wood J.M."/>
            <person name="Wray P.W."/>
            <person name="Wyatt J.C."/>
            <person name="Young L."/>
            <person name="Younger R.M."/>
            <person name="Bentley D.R."/>
            <person name="Coulson A."/>
            <person name="Durbin R.M."/>
            <person name="Hubbard T."/>
            <person name="Sulston J.E."/>
            <person name="Dunham I."/>
            <person name="Rogers J."/>
            <person name="Beck S."/>
        </authorList>
    </citation>
    <scope>NUCLEOTIDE SEQUENCE [LARGE SCALE GENOMIC DNA]</scope>
</reference>
<reference key="3">
    <citation type="journal article" date="2004" name="Genome Res.">
        <title>The status, quality, and expansion of the NIH full-length cDNA project: the Mammalian Gene Collection (MGC).</title>
        <authorList>
            <consortium name="The MGC Project Team"/>
        </authorList>
    </citation>
    <scope>NUCLEOTIDE SEQUENCE [LARGE SCALE MRNA]</scope>
    <scope>VARIANT SER-265</scope>
    <source>
        <tissue>Brain</tissue>
    </source>
</reference>
<reference key="4">
    <citation type="journal article" date="1999" name="J. Biol. Chem.">
        <title>Function of the cloned putative neutral sphingomyelinase as lyso-platelet activating factor-phospholipase C.</title>
        <authorList>
            <person name="Sawai H."/>
            <person name="Domae N."/>
            <person name="Nagan N."/>
            <person name="Hannun Y.A."/>
        </authorList>
    </citation>
    <scope>FUNCTION</scope>
    <scope>CATALYTIC ACTIVITY</scope>
    <scope>COFACTOR</scope>
    <scope>BIOPHYSICOCHEMICAL PROPERTIES</scope>
    <scope>PATHWAY</scope>
</reference>
<reference key="5">
    <citation type="journal article" date="2004" name="FEBS Lett.">
        <title>Hydrolysis of sphingosylphosphocholine by neutral sphingomyelinases.</title>
        <authorList>
            <person name="Miura Y."/>
            <person name="Gotoh E."/>
            <person name="Nara F."/>
            <person name="Nishijima M."/>
            <person name="Hanada K."/>
        </authorList>
    </citation>
    <scope>FUNCTION</scope>
    <scope>CATALYTIC ACTIVITY</scope>
    <scope>BIOPHYSICOCHEMICAL PROPERTIES</scope>
    <scope>PATHWAY</scope>
</reference>
<evidence type="ECO:0000250" key="1"/>
<evidence type="ECO:0000250" key="2">
    <source>
        <dbReference type="UniProtKB" id="O70572"/>
    </source>
</evidence>
<evidence type="ECO:0000255" key="3"/>
<evidence type="ECO:0000256" key="4">
    <source>
        <dbReference type="SAM" id="MobiDB-lite"/>
    </source>
</evidence>
<evidence type="ECO:0000269" key="5">
    <source>
    </source>
</evidence>
<evidence type="ECO:0000269" key="6">
    <source>
    </source>
</evidence>
<evidence type="ECO:0000269" key="7">
    <source>
    </source>
</evidence>
<evidence type="ECO:0000269" key="8">
    <source>
    </source>
</evidence>
<evidence type="ECO:0000303" key="9">
    <source>
    </source>
</evidence>
<evidence type="ECO:0000303" key="10">
    <source>
    </source>
</evidence>
<evidence type="ECO:0000303" key="11">
    <source>
    </source>
</evidence>
<evidence type="ECO:0000305" key="12"/>
<evidence type="ECO:0000305" key="13">
    <source>
    </source>
</evidence>
<evidence type="ECO:0000305" key="14">
    <source>
    </source>
</evidence>
<evidence type="ECO:0000312" key="15">
    <source>
        <dbReference type="HGNC" id="HGNC:11121"/>
    </source>
</evidence>
<evidence type="ECO:0007829" key="16">
    <source>
        <dbReference type="PDB" id="8J2F"/>
    </source>
</evidence>
<keyword id="KW-0002">3D-structure</keyword>
<keyword id="KW-1003">Cell membrane</keyword>
<keyword id="KW-0378">Hydrolase</keyword>
<keyword id="KW-0443">Lipid metabolism</keyword>
<keyword id="KW-0460">Magnesium</keyword>
<keyword id="KW-0472">Membrane</keyword>
<keyword id="KW-0479">Metal-binding</keyword>
<keyword id="KW-1267">Proteomics identification</keyword>
<keyword id="KW-1185">Reference proteome</keyword>
<keyword id="KW-0746">Sphingolipid metabolism</keyword>
<keyword id="KW-0812">Transmembrane</keyword>
<keyword id="KW-1133">Transmembrane helix</keyword>
<proteinExistence type="evidence at protein level"/>
<dbReference type="EC" id="3.1.4.12" evidence="5 6"/>
<dbReference type="EMBL" id="AJ222801">
    <property type="protein sequence ID" value="CAA10995.1"/>
    <property type="molecule type" value="mRNA"/>
</dbReference>
<dbReference type="EMBL" id="AL109947">
    <property type="status" value="NOT_ANNOTATED_CDS"/>
    <property type="molecule type" value="Genomic_DNA"/>
</dbReference>
<dbReference type="EMBL" id="BC000038">
    <property type="protein sequence ID" value="AAH00038.1"/>
    <property type="molecule type" value="mRNA"/>
</dbReference>
<dbReference type="CCDS" id="CCDS5075.1"/>
<dbReference type="RefSeq" id="NP_003071.2">
    <property type="nucleotide sequence ID" value="NM_003080.3"/>
</dbReference>
<dbReference type="PDB" id="8J2F">
    <property type="method" value="EM"/>
    <property type="resolution" value="3.07 A"/>
    <property type="chains" value="A/B=1-423"/>
</dbReference>
<dbReference type="PDBsum" id="8J2F"/>
<dbReference type="EMDB" id="EMD-35948"/>
<dbReference type="SMR" id="O60906"/>
<dbReference type="BioGRID" id="112494">
    <property type="interactions" value="94"/>
</dbReference>
<dbReference type="FunCoup" id="O60906">
    <property type="interactions" value="1036"/>
</dbReference>
<dbReference type="IntAct" id="O60906">
    <property type="interactions" value="79"/>
</dbReference>
<dbReference type="MINT" id="O60906"/>
<dbReference type="STRING" id="9606.ENSP00000258052"/>
<dbReference type="BindingDB" id="O60906"/>
<dbReference type="ChEMBL" id="CHEMBL4712"/>
<dbReference type="SwissLipids" id="SLP:000000174"/>
<dbReference type="iPTMnet" id="O60906"/>
<dbReference type="PhosphoSitePlus" id="O60906"/>
<dbReference type="SwissPalm" id="O60906"/>
<dbReference type="BioMuta" id="SMPD2"/>
<dbReference type="jPOST" id="O60906"/>
<dbReference type="MassIVE" id="O60906"/>
<dbReference type="PaxDb" id="9606-ENSP00000258052"/>
<dbReference type="PeptideAtlas" id="O60906"/>
<dbReference type="ProteomicsDB" id="49663"/>
<dbReference type="Pumba" id="O60906"/>
<dbReference type="Antibodypedia" id="19179">
    <property type="antibodies" value="208 antibodies from 30 providers"/>
</dbReference>
<dbReference type="DNASU" id="6610"/>
<dbReference type="Ensembl" id="ENST00000258052.8">
    <property type="protein sequence ID" value="ENSP00000258052.3"/>
    <property type="gene ID" value="ENSG00000135587.9"/>
</dbReference>
<dbReference type="GeneID" id="6610"/>
<dbReference type="KEGG" id="hsa:6610"/>
<dbReference type="MANE-Select" id="ENST00000258052.8">
    <property type="protein sequence ID" value="ENSP00000258052.3"/>
    <property type="RefSeq nucleotide sequence ID" value="NM_003080.3"/>
    <property type="RefSeq protein sequence ID" value="NP_003071.2"/>
</dbReference>
<dbReference type="UCSC" id="uc003pti.4">
    <property type="organism name" value="human"/>
</dbReference>
<dbReference type="AGR" id="HGNC:11121"/>
<dbReference type="CTD" id="6610"/>
<dbReference type="DisGeNET" id="6610"/>
<dbReference type="GeneCards" id="SMPD2"/>
<dbReference type="HGNC" id="HGNC:11121">
    <property type="gene designation" value="SMPD2"/>
</dbReference>
<dbReference type="HPA" id="ENSG00000135587">
    <property type="expression patterns" value="Tissue enhanced (testis)"/>
</dbReference>
<dbReference type="MalaCards" id="SMPD2"/>
<dbReference type="MIM" id="603498">
    <property type="type" value="gene"/>
</dbReference>
<dbReference type="neXtProt" id="NX_O60906"/>
<dbReference type="OpenTargets" id="ENSG00000135587"/>
<dbReference type="PharmGKB" id="PA35970"/>
<dbReference type="VEuPathDB" id="HostDB:ENSG00000135587"/>
<dbReference type="eggNOG" id="KOG3873">
    <property type="taxonomic scope" value="Eukaryota"/>
</dbReference>
<dbReference type="GeneTree" id="ENSGT00390000009166"/>
<dbReference type="HOGENOM" id="CLU_034001_4_0_1"/>
<dbReference type="InParanoid" id="O60906"/>
<dbReference type="OMA" id="LWTPNVG"/>
<dbReference type="OrthoDB" id="387657at2759"/>
<dbReference type="PAN-GO" id="O60906">
    <property type="GO annotations" value="7 GO annotations based on evolutionary models"/>
</dbReference>
<dbReference type="PhylomeDB" id="O60906"/>
<dbReference type="TreeFam" id="TF313899"/>
<dbReference type="BRENDA" id="3.1.4.12">
    <property type="organism ID" value="2681"/>
</dbReference>
<dbReference type="PathwayCommons" id="O60906"/>
<dbReference type="Reactome" id="R-HSA-193681">
    <property type="pathway name" value="Ceramide signalling"/>
</dbReference>
<dbReference type="Reactome" id="R-HSA-5626978">
    <property type="pathway name" value="TNFR1-mediated ceramide production"/>
</dbReference>
<dbReference type="Reactome" id="R-HSA-9840310">
    <property type="pathway name" value="Glycosphingolipid catabolism"/>
</dbReference>
<dbReference type="SignaLink" id="O60906"/>
<dbReference type="UniPathway" id="UPA00222"/>
<dbReference type="BioGRID-ORCS" id="6610">
    <property type="hits" value="15 hits in 1159 CRISPR screens"/>
</dbReference>
<dbReference type="GeneWiki" id="SMPD2"/>
<dbReference type="GenomeRNAi" id="6610"/>
<dbReference type="Pharos" id="O60906">
    <property type="development level" value="Tchem"/>
</dbReference>
<dbReference type="PRO" id="PR:O60906"/>
<dbReference type="Proteomes" id="UP000005640">
    <property type="component" value="Chromosome 6"/>
</dbReference>
<dbReference type="RNAct" id="O60906">
    <property type="molecule type" value="protein"/>
</dbReference>
<dbReference type="Bgee" id="ENSG00000135587">
    <property type="expression patterns" value="Expressed in right uterine tube and 118 other cell types or tissues"/>
</dbReference>
<dbReference type="ExpressionAtlas" id="O60906">
    <property type="expression patterns" value="baseline and differential"/>
</dbReference>
<dbReference type="GO" id="GO:0005901">
    <property type="term" value="C:caveola"/>
    <property type="evidence" value="ECO:0000318"/>
    <property type="project" value="GO_Central"/>
</dbReference>
<dbReference type="GO" id="GO:0071944">
    <property type="term" value="C:cell periphery"/>
    <property type="evidence" value="ECO:0000318"/>
    <property type="project" value="GO_Central"/>
</dbReference>
<dbReference type="GO" id="GO:0005783">
    <property type="term" value="C:endoplasmic reticulum"/>
    <property type="evidence" value="ECO:0000318"/>
    <property type="project" value="GO_Central"/>
</dbReference>
<dbReference type="GO" id="GO:0005886">
    <property type="term" value="C:plasma membrane"/>
    <property type="evidence" value="ECO:0000250"/>
    <property type="project" value="UniProtKB"/>
</dbReference>
<dbReference type="GO" id="GO:0046872">
    <property type="term" value="F:metal ion binding"/>
    <property type="evidence" value="ECO:0007669"/>
    <property type="project" value="UniProtKB-KW"/>
</dbReference>
<dbReference type="GO" id="GO:0008081">
    <property type="term" value="F:phosphoric diester hydrolase activity"/>
    <property type="evidence" value="ECO:0000314"/>
    <property type="project" value="UniProtKB"/>
</dbReference>
<dbReference type="GO" id="GO:0004767">
    <property type="term" value="F:sphingomyelin phosphodiesterase activity"/>
    <property type="evidence" value="ECO:0000314"/>
    <property type="project" value="UniProtKB"/>
</dbReference>
<dbReference type="GO" id="GO:0046513">
    <property type="term" value="P:ceramide biosynthetic process"/>
    <property type="evidence" value="ECO:0000318"/>
    <property type="project" value="GO_Central"/>
</dbReference>
<dbReference type="GO" id="GO:0035556">
    <property type="term" value="P:intracellular signal transduction"/>
    <property type="evidence" value="ECO:0007669"/>
    <property type="project" value="Ensembl"/>
</dbReference>
<dbReference type="GO" id="GO:0009612">
    <property type="term" value="P:response to mechanical stimulus"/>
    <property type="evidence" value="ECO:0007669"/>
    <property type="project" value="Ensembl"/>
</dbReference>
<dbReference type="GO" id="GO:0030149">
    <property type="term" value="P:sphingolipid catabolic process"/>
    <property type="evidence" value="ECO:0000318"/>
    <property type="project" value="GO_Central"/>
</dbReference>
<dbReference type="GO" id="GO:0006685">
    <property type="term" value="P:sphingomyelin catabolic process"/>
    <property type="evidence" value="ECO:0000314"/>
    <property type="project" value="UniProtKB"/>
</dbReference>
<dbReference type="GO" id="GO:0006684">
    <property type="term" value="P:sphingomyelin metabolic process"/>
    <property type="evidence" value="ECO:0000318"/>
    <property type="project" value="GO_Central"/>
</dbReference>
<dbReference type="FunFam" id="3.60.10.10:FF:000033">
    <property type="entry name" value="sphingomyelin phosphodiesterase 2"/>
    <property type="match status" value="1"/>
</dbReference>
<dbReference type="Gene3D" id="3.60.10.10">
    <property type="entry name" value="Endonuclease/exonuclease/phosphatase"/>
    <property type="match status" value="1"/>
</dbReference>
<dbReference type="InterPro" id="IPR036691">
    <property type="entry name" value="Endo/exonu/phosph_ase_sf"/>
</dbReference>
<dbReference type="InterPro" id="IPR005135">
    <property type="entry name" value="Endo/exonuclease/phosphatase"/>
</dbReference>
<dbReference type="InterPro" id="IPR038772">
    <property type="entry name" value="Sph/SMPD2-like"/>
</dbReference>
<dbReference type="PANTHER" id="PTHR16320:SF24">
    <property type="entry name" value="PHOSPHODIESTERASE, PUTATIVE-RELATED"/>
    <property type="match status" value="1"/>
</dbReference>
<dbReference type="PANTHER" id="PTHR16320">
    <property type="entry name" value="SPHINGOMYELINASE FAMILY MEMBER"/>
    <property type="match status" value="1"/>
</dbReference>
<dbReference type="Pfam" id="PF03372">
    <property type="entry name" value="Exo_endo_phos"/>
    <property type="match status" value="1"/>
</dbReference>
<dbReference type="SUPFAM" id="SSF56219">
    <property type="entry name" value="DNase I-like"/>
    <property type="match status" value="1"/>
</dbReference>
<accession>O60906</accession>
<accession>Q5TED1</accession>
<accession>Q9BWR3</accession>